<organism>
    <name type="scientific">Staphylococcus aureus (strain MSSA476)</name>
    <dbReference type="NCBI Taxonomy" id="282459"/>
    <lineage>
        <taxon>Bacteria</taxon>
        <taxon>Bacillati</taxon>
        <taxon>Bacillota</taxon>
        <taxon>Bacilli</taxon>
        <taxon>Bacillales</taxon>
        <taxon>Staphylococcaceae</taxon>
        <taxon>Staphylococcus</taxon>
    </lineage>
</organism>
<protein>
    <recommendedName>
        <fullName evidence="1">Putative membrane protein insertion efficiency factor</fullName>
    </recommendedName>
</protein>
<keyword id="KW-1003">Cell membrane</keyword>
<keyword id="KW-0472">Membrane</keyword>
<comment type="function">
    <text evidence="1">Could be involved in insertion of integral membrane proteins into the membrane.</text>
</comment>
<comment type="subcellular location">
    <subcellularLocation>
        <location evidence="1">Cell membrane</location>
        <topology evidence="1">Peripheral membrane protein</topology>
        <orientation evidence="1">Cytoplasmic side</orientation>
    </subcellularLocation>
</comment>
<comment type="similarity">
    <text evidence="1">Belongs to the UPF0161 family.</text>
</comment>
<feature type="chain" id="PRO_0000171870" description="Putative membrane protein insertion efficiency factor">
    <location>
        <begin position="1"/>
        <end position="85"/>
    </location>
</feature>
<feature type="region of interest" description="Disordered" evidence="2">
    <location>
        <begin position="62"/>
        <end position="85"/>
    </location>
</feature>
<reference key="1">
    <citation type="journal article" date="2004" name="Proc. Natl. Acad. Sci. U.S.A.">
        <title>Complete genomes of two clinical Staphylococcus aureus strains: evidence for the rapid evolution of virulence and drug resistance.</title>
        <authorList>
            <person name="Holden M.T.G."/>
            <person name="Feil E.J."/>
            <person name="Lindsay J.A."/>
            <person name="Peacock S.J."/>
            <person name="Day N.P.J."/>
            <person name="Enright M.C."/>
            <person name="Foster T.J."/>
            <person name="Moore C.E."/>
            <person name="Hurst L."/>
            <person name="Atkin R."/>
            <person name="Barron A."/>
            <person name="Bason N."/>
            <person name="Bentley S.D."/>
            <person name="Chillingworth C."/>
            <person name="Chillingworth T."/>
            <person name="Churcher C."/>
            <person name="Clark L."/>
            <person name="Corton C."/>
            <person name="Cronin A."/>
            <person name="Doggett J."/>
            <person name="Dowd L."/>
            <person name="Feltwell T."/>
            <person name="Hance Z."/>
            <person name="Harris B."/>
            <person name="Hauser H."/>
            <person name="Holroyd S."/>
            <person name="Jagels K."/>
            <person name="James K.D."/>
            <person name="Lennard N."/>
            <person name="Line A."/>
            <person name="Mayes R."/>
            <person name="Moule S."/>
            <person name="Mungall K."/>
            <person name="Ormond D."/>
            <person name="Quail M.A."/>
            <person name="Rabbinowitsch E."/>
            <person name="Rutherford K.M."/>
            <person name="Sanders M."/>
            <person name="Sharp S."/>
            <person name="Simmonds M."/>
            <person name="Stevens K."/>
            <person name="Whitehead S."/>
            <person name="Barrell B.G."/>
            <person name="Spratt B.G."/>
            <person name="Parkhill J."/>
        </authorList>
    </citation>
    <scope>NUCLEOTIDE SEQUENCE [LARGE SCALE GENOMIC DNA]</scope>
    <source>
        <strain>MSSA476</strain>
    </source>
</reference>
<gene>
    <name type="ordered locus">SAS1715</name>
</gene>
<proteinExistence type="inferred from homology"/>
<sequence length="85" mass="9967">MKKIFLAMIHFYQRFISPLTPPTCRFYPTCSEYTREAIQYHGAFKGLYLGIRRILKCHPLHKGGFDPVPLKKDKSASKHSHKHNH</sequence>
<name>YIDD_STAAS</name>
<accession>Q6G8D8</accession>
<evidence type="ECO:0000255" key="1">
    <source>
        <dbReference type="HAMAP-Rule" id="MF_00386"/>
    </source>
</evidence>
<evidence type="ECO:0000256" key="2">
    <source>
        <dbReference type="SAM" id="MobiDB-lite"/>
    </source>
</evidence>
<dbReference type="EMBL" id="BX571857">
    <property type="protein sequence ID" value="CAG43519.1"/>
    <property type="molecule type" value="Genomic_DNA"/>
</dbReference>
<dbReference type="KEGG" id="sas:SAS1715"/>
<dbReference type="HOGENOM" id="CLU_144811_6_0_9"/>
<dbReference type="GO" id="GO:0005886">
    <property type="term" value="C:plasma membrane"/>
    <property type="evidence" value="ECO:0007669"/>
    <property type="project" value="UniProtKB-SubCell"/>
</dbReference>
<dbReference type="HAMAP" id="MF_00386">
    <property type="entry name" value="UPF0161_YidD"/>
    <property type="match status" value="1"/>
</dbReference>
<dbReference type="InterPro" id="IPR002696">
    <property type="entry name" value="Membr_insert_effic_factor_YidD"/>
</dbReference>
<dbReference type="NCBIfam" id="TIGR00278">
    <property type="entry name" value="membrane protein insertion efficiency factor YidD"/>
    <property type="match status" value="1"/>
</dbReference>
<dbReference type="PANTHER" id="PTHR33383">
    <property type="entry name" value="MEMBRANE PROTEIN INSERTION EFFICIENCY FACTOR-RELATED"/>
    <property type="match status" value="1"/>
</dbReference>
<dbReference type="PANTHER" id="PTHR33383:SF1">
    <property type="entry name" value="MEMBRANE PROTEIN INSERTION EFFICIENCY FACTOR-RELATED"/>
    <property type="match status" value="1"/>
</dbReference>
<dbReference type="Pfam" id="PF01809">
    <property type="entry name" value="YidD"/>
    <property type="match status" value="1"/>
</dbReference>
<dbReference type="SMART" id="SM01234">
    <property type="entry name" value="Haemolytic"/>
    <property type="match status" value="1"/>
</dbReference>